<reference key="1">
    <citation type="journal article" date="2006" name="Proc. Natl. Acad. Sci. U.S.A.">
        <title>Molecular genetic anatomy of inter- and intraserotype variation in the human bacterial pathogen group A Streptococcus.</title>
        <authorList>
            <person name="Beres S.B."/>
            <person name="Richter E.W."/>
            <person name="Nagiec M.J."/>
            <person name="Sumby P."/>
            <person name="Porcella S.F."/>
            <person name="DeLeo F.R."/>
            <person name="Musser J.M."/>
        </authorList>
    </citation>
    <scope>NUCLEOTIDE SEQUENCE [LARGE SCALE GENOMIC DNA]</scope>
    <source>
        <strain>MGAS10750</strain>
    </source>
</reference>
<dbReference type="EMBL" id="CP000262">
    <property type="protein sequence ID" value="ABF38554.1"/>
    <property type="status" value="ALT_INIT"/>
    <property type="molecule type" value="Genomic_DNA"/>
</dbReference>
<dbReference type="SMR" id="Q1J532"/>
<dbReference type="KEGG" id="spi:MGAS10750_Spy1604"/>
<dbReference type="HOGENOM" id="CLU_087843_3_2_9"/>
<dbReference type="Proteomes" id="UP000002434">
    <property type="component" value="Chromosome"/>
</dbReference>
<dbReference type="GO" id="GO:0005829">
    <property type="term" value="C:cytosol"/>
    <property type="evidence" value="ECO:0007669"/>
    <property type="project" value="TreeGrafter"/>
</dbReference>
<dbReference type="GO" id="GO:0003723">
    <property type="term" value="F:RNA binding"/>
    <property type="evidence" value="ECO:0007669"/>
    <property type="project" value="UniProtKB-UniRule"/>
</dbReference>
<dbReference type="GO" id="GO:0006353">
    <property type="term" value="P:DNA-templated transcription termination"/>
    <property type="evidence" value="ECO:0007669"/>
    <property type="project" value="UniProtKB-UniRule"/>
</dbReference>
<dbReference type="GO" id="GO:0031564">
    <property type="term" value="P:transcription antitermination"/>
    <property type="evidence" value="ECO:0007669"/>
    <property type="project" value="UniProtKB-KW"/>
</dbReference>
<dbReference type="Gene3D" id="1.10.940.10">
    <property type="entry name" value="NusB-like"/>
    <property type="match status" value="1"/>
</dbReference>
<dbReference type="HAMAP" id="MF_00073">
    <property type="entry name" value="NusB"/>
    <property type="match status" value="1"/>
</dbReference>
<dbReference type="InterPro" id="IPR035926">
    <property type="entry name" value="NusB-like_sf"/>
</dbReference>
<dbReference type="InterPro" id="IPR011605">
    <property type="entry name" value="NusB_fam"/>
</dbReference>
<dbReference type="InterPro" id="IPR006027">
    <property type="entry name" value="NusB_RsmB_TIM44"/>
</dbReference>
<dbReference type="NCBIfam" id="TIGR01951">
    <property type="entry name" value="nusB"/>
    <property type="match status" value="1"/>
</dbReference>
<dbReference type="NCBIfam" id="NF001223">
    <property type="entry name" value="PRK00202.1-1"/>
    <property type="match status" value="1"/>
</dbReference>
<dbReference type="PANTHER" id="PTHR11078:SF3">
    <property type="entry name" value="ANTITERMINATION NUSB DOMAIN-CONTAINING PROTEIN"/>
    <property type="match status" value="1"/>
</dbReference>
<dbReference type="PANTHER" id="PTHR11078">
    <property type="entry name" value="N UTILIZATION SUBSTANCE PROTEIN B-RELATED"/>
    <property type="match status" value="1"/>
</dbReference>
<dbReference type="Pfam" id="PF01029">
    <property type="entry name" value="NusB"/>
    <property type="match status" value="1"/>
</dbReference>
<dbReference type="SUPFAM" id="SSF48013">
    <property type="entry name" value="NusB-like"/>
    <property type="match status" value="1"/>
</dbReference>
<sequence length="150" mass="17009">MTNSFQNSRRDLRERAFQALFNIEMGAELLAASQFAYGYDKVTGEDAQVLELPIFLLSLVMGVNNHKEELDNLISTHLKKGWSLERLTLTDKTLLRLGLFEIKYFDETPDRVALNEIIEVAKKYSDETSAKFINGLLSQYVSEAPSANKS</sequence>
<evidence type="ECO:0000255" key="1">
    <source>
        <dbReference type="HAMAP-Rule" id="MF_00073"/>
    </source>
</evidence>
<evidence type="ECO:0000305" key="2"/>
<accession>Q1J532</accession>
<comment type="function">
    <text evidence="1">Involved in transcription antitermination. Required for transcription of ribosomal RNA (rRNA) genes. Binds specifically to the boxA antiterminator sequence of the ribosomal RNA (rrn) operons.</text>
</comment>
<comment type="similarity">
    <text evidence="1">Belongs to the NusB family.</text>
</comment>
<comment type="sequence caution" evidence="2">
    <conflict type="erroneous initiation">
        <sequence resource="EMBL-CDS" id="ABF38554"/>
    </conflict>
</comment>
<gene>
    <name evidence="1" type="primary">nusB</name>
    <name type="ordered locus">MGAS10750_Spy1604</name>
</gene>
<protein>
    <recommendedName>
        <fullName evidence="1">Transcription antitermination protein NusB</fullName>
    </recommendedName>
    <alternativeName>
        <fullName evidence="1">Antitermination factor NusB</fullName>
    </alternativeName>
</protein>
<name>NUSB_STRPF</name>
<keyword id="KW-0694">RNA-binding</keyword>
<keyword id="KW-0804">Transcription</keyword>
<keyword id="KW-0889">Transcription antitermination</keyword>
<keyword id="KW-0805">Transcription regulation</keyword>
<organism>
    <name type="scientific">Streptococcus pyogenes serotype M4 (strain MGAS10750)</name>
    <dbReference type="NCBI Taxonomy" id="370554"/>
    <lineage>
        <taxon>Bacteria</taxon>
        <taxon>Bacillati</taxon>
        <taxon>Bacillota</taxon>
        <taxon>Bacilli</taxon>
        <taxon>Lactobacillales</taxon>
        <taxon>Streptococcaceae</taxon>
        <taxon>Streptococcus</taxon>
    </lineage>
</organism>
<feature type="chain" id="PRO_0000265607" description="Transcription antitermination protein NusB">
    <location>
        <begin position="1"/>
        <end position="150"/>
    </location>
</feature>
<proteinExistence type="inferred from homology"/>